<dbReference type="EMBL" id="CH933807">
    <property type="protein sequence ID" value="EDW11179.1"/>
    <property type="molecule type" value="Genomic_DNA"/>
</dbReference>
<dbReference type="SMR" id="B4KGX9"/>
<dbReference type="FunCoup" id="B4KGX9">
    <property type="interactions" value="1572"/>
</dbReference>
<dbReference type="EnsemblMetazoa" id="FBtr0166100">
    <property type="protein sequence ID" value="FBpp0164592"/>
    <property type="gene ID" value="FBgn0138124"/>
</dbReference>
<dbReference type="EnsemblMetazoa" id="XM_002001701.4">
    <property type="protein sequence ID" value="XP_002001737.2"/>
    <property type="gene ID" value="LOC6575732"/>
</dbReference>
<dbReference type="GeneID" id="6575732"/>
<dbReference type="KEGG" id="dmo:Dmoj_GI15375"/>
<dbReference type="CTD" id="8668"/>
<dbReference type="eggNOG" id="KOG0643">
    <property type="taxonomic scope" value="Eukaryota"/>
</dbReference>
<dbReference type="HOGENOM" id="CLU_043845_0_1_1"/>
<dbReference type="InParanoid" id="B4KGX9"/>
<dbReference type="OMA" id="VWFSHNG"/>
<dbReference type="OrthoDB" id="24966at2759"/>
<dbReference type="PhylomeDB" id="B4KGX9"/>
<dbReference type="ChiTaRS" id="Trip1">
    <property type="organism name" value="fly"/>
</dbReference>
<dbReference type="Proteomes" id="UP000009192">
    <property type="component" value="Unassembled WGS sequence"/>
</dbReference>
<dbReference type="GO" id="GO:0016282">
    <property type="term" value="C:eukaryotic 43S preinitiation complex"/>
    <property type="evidence" value="ECO:0007669"/>
    <property type="project" value="UniProtKB-UniRule"/>
</dbReference>
<dbReference type="GO" id="GO:0033290">
    <property type="term" value="C:eukaryotic 48S preinitiation complex"/>
    <property type="evidence" value="ECO:0007669"/>
    <property type="project" value="UniProtKB-UniRule"/>
</dbReference>
<dbReference type="GO" id="GO:0071541">
    <property type="term" value="C:eukaryotic translation initiation factor 3 complex, eIF3m"/>
    <property type="evidence" value="ECO:0007669"/>
    <property type="project" value="TreeGrafter"/>
</dbReference>
<dbReference type="GO" id="GO:0003723">
    <property type="term" value="F:RNA binding"/>
    <property type="evidence" value="ECO:0007669"/>
    <property type="project" value="TreeGrafter"/>
</dbReference>
<dbReference type="GO" id="GO:0003743">
    <property type="term" value="F:translation initiation factor activity"/>
    <property type="evidence" value="ECO:0007669"/>
    <property type="project" value="UniProtKB-UniRule"/>
</dbReference>
<dbReference type="GO" id="GO:0001732">
    <property type="term" value="P:formation of cytoplasmic translation initiation complex"/>
    <property type="evidence" value="ECO:0007669"/>
    <property type="project" value="UniProtKB-UniRule"/>
</dbReference>
<dbReference type="FunFam" id="2.130.10.10:FF:000127">
    <property type="entry name" value="Eukaryotic translation initiation factor 3 subunit I"/>
    <property type="match status" value="1"/>
</dbReference>
<dbReference type="Gene3D" id="2.130.10.10">
    <property type="entry name" value="YVTN repeat-like/Quinoprotein amine dehydrogenase"/>
    <property type="match status" value="1"/>
</dbReference>
<dbReference type="HAMAP" id="MF_03008">
    <property type="entry name" value="eIF3i"/>
    <property type="match status" value="1"/>
</dbReference>
<dbReference type="InterPro" id="IPR027525">
    <property type="entry name" value="eIF3i"/>
</dbReference>
<dbReference type="InterPro" id="IPR015943">
    <property type="entry name" value="WD40/YVTN_repeat-like_dom_sf"/>
</dbReference>
<dbReference type="InterPro" id="IPR019775">
    <property type="entry name" value="WD40_repeat_CS"/>
</dbReference>
<dbReference type="InterPro" id="IPR036322">
    <property type="entry name" value="WD40_repeat_dom_sf"/>
</dbReference>
<dbReference type="InterPro" id="IPR001680">
    <property type="entry name" value="WD40_rpt"/>
</dbReference>
<dbReference type="PANTHER" id="PTHR19877">
    <property type="entry name" value="EUKARYOTIC TRANSLATION INITIATION FACTOR 3 SUBUNIT I"/>
    <property type="match status" value="1"/>
</dbReference>
<dbReference type="PANTHER" id="PTHR19877:SF1">
    <property type="entry name" value="EUKARYOTIC TRANSLATION INITIATION FACTOR 3 SUBUNIT I"/>
    <property type="match status" value="1"/>
</dbReference>
<dbReference type="Pfam" id="PF24805">
    <property type="entry name" value="EIF3I"/>
    <property type="match status" value="1"/>
</dbReference>
<dbReference type="SMART" id="SM00320">
    <property type="entry name" value="WD40"/>
    <property type="match status" value="6"/>
</dbReference>
<dbReference type="SUPFAM" id="SSF50978">
    <property type="entry name" value="WD40 repeat-like"/>
    <property type="match status" value="1"/>
</dbReference>
<dbReference type="PROSITE" id="PS00678">
    <property type="entry name" value="WD_REPEATS_1"/>
    <property type="match status" value="2"/>
</dbReference>
<dbReference type="PROSITE" id="PS50082">
    <property type="entry name" value="WD_REPEATS_2"/>
    <property type="match status" value="5"/>
</dbReference>
<dbReference type="PROSITE" id="PS50294">
    <property type="entry name" value="WD_REPEATS_REGION"/>
    <property type="match status" value="2"/>
</dbReference>
<keyword id="KW-0963">Cytoplasm</keyword>
<keyword id="KW-0396">Initiation factor</keyword>
<keyword id="KW-0648">Protein biosynthesis</keyword>
<keyword id="KW-1185">Reference proteome</keyword>
<keyword id="KW-0677">Repeat</keyword>
<keyword id="KW-0853">WD repeat</keyword>
<organism>
    <name type="scientific">Drosophila mojavensis</name>
    <name type="common">Fruit fly</name>
    <dbReference type="NCBI Taxonomy" id="7230"/>
    <lineage>
        <taxon>Eukaryota</taxon>
        <taxon>Metazoa</taxon>
        <taxon>Ecdysozoa</taxon>
        <taxon>Arthropoda</taxon>
        <taxon>Hexapoda</taxon>
        <taxon>Insecta</taxon>
        <taxon>Pterygota</taxon>
        <taxon>Neoptera</taxon>
        <taxon>Endopterygota</taxon>
        <taxon>Diptera</taxon>
        <taxon>Brachycera</taxon>
        <taxon>Muscomorpha</taxon>
        <taxon>Ephydroidea</taxon>
        <taxon>Drosophilidae</taxon>
        <taxon>Drosophila</taxon>
    </lineage>
</organism>
<name>EIF3I_DROMO</name>
<evidence type="ECO:0000255" key="1">
    <source>
        <dbReference type="HAMAP-Rule" id="MF_03008"/>
    </source>
</evidence>
<sequence length="322" mass="35615">MLQGHERSITQIKYNREGDLLFSCSKDQKPNVWYSLNGERLGTYDGHQGAVWCLDVDWETRKLITGAGDMTTKIWDVEYGTVIASIAAKSSVRTCNFSFSGNQAAYSTDKAMGQNCELFIIDVRNADSSLSEQAPTLRIPMVESKITSMLWGPLDETIITGHDNGNIAIWDIRKGQKVVDSGSDHTAGINDMQLSKDGTMFVTASKDTTAKLFDSESLMCLKTYKTERPVNSAAISPILDHVVLGGGQDAMEVTTTSTKAGKFDSRFFHLIYEEEFARLKGHFGPINSLAFHPDGKSYASGGEDGFVRVQTFDSTYFENIFE</sequence>
<feature type="chain" id="PRO_0000365345" description="Eukaryotic translation initiation factor 3 subunit I">
    <location>
        <begin position="1"/>
        <end position="322"/>
    </location>
</feature>
<feature type="repeat" description="WD 1">
    <location>
        <begin position="4"/>
        <end position="43"/>
    </location>
</feature>
<feature type="repeat" description="WD 2">
    <location>
        <begin position="46"/>
        <end position="85"/>
    </location>
</feature>
<feature type="repeat" description="WD 3">
    <location>
        <begin position="141"/>
        <end position="180"/>
    </location>
</feature>
<feature type="repeat" description="WD 4">
    <location>
        <begin position="184"/>
        <end position="223"/>
    </location>
</feature>
<feature type="repeat" description="WD 5">
    <location>
        <begin position="281"/>
        <end position="322"/>
    </location>
</feature>
<accession>B4KGX9</accession>
<reference key="1">
    <citation type="journal article" date="2007" name="Nature">
        <title>Evolution of genes and genomes on the Drosophila phylogeny.</title>
        <authorList>
            <consortium name="Drosophila 12 genomes consortium"/>
        </authorList>
    </citation>
    <scope>NUCLEOTIDE SEQUENCE [LARGE SCALE GENOMIC DNA]</scope>
    <source>
        <strain>Tucson 15081-1352.22</strain>
    </source>
</reference>
<comment type="function">
    <text evidence="1">Component of the eukaryotic translation initiation factor 3 (eIF-3) complex, which is involved in protein synthesis of a specialized repertoire of mRNAs and, together with other initiation factors, stimulates binding of mRNA and methionyl-tRNAi to the 40S ribosome. The eIF-3 complex specifically targets and initiates translation of a subset of mRNAs involved in cell proliferation.</text>
</comment>
<comment type="subunit">
    <text evidence="1">Component of the eukaryotic translation initiation factor 3 (eIF-3) complex. The eIF-3 complex interacts with pix.</text>
</comment>
<comment type="subcellular location">
    <subcellularLocation>
        <location evidence="1">Cytoplasm</location>
    </subcellularLocation>
</comment>
<comment type="similarity">
    <text evidence="1">Belongs to the eIF-3 subunit I family.</text>
</comment>
<proteinExistence type="inferred from homology"/>
<gene>
    <name evidence="1" type="primary">eIF3i</name>
    <name evidence="1" type="synonym">eif3-S2</name>
    <name evidence="1" type="synonym">Trip1</name>
    <name type="ORF">GI15375</name>
</gene>
<protein>
    <recommendedName>
        <fullName evidence="1">Eukaryotic translation initiation factor 3 subunit I</fullName>
        <shortName evidence="1">eIF3i</shortName>
    </recommendedName>
    <alternativeName>
        <fullName evidence="1">Eukaryotic translation initiation factor 3 subunit 2</fullName>
    </alternativeName>
    <alternativeName>
        <fullName>TRIP-1 homolog</fullName>
    </alternativeName>
</protein>